<feature type="chain" id="PRO_0000116630" description="Uncharacterized protein C6G9.15c">
    <location>
        <begin position="1"/>
        <end position="498"/>
    </location>
</feature>
<feature type="region of interest" description="Disordered" evidence="1">
    <location>
        <begin position="1"/>
        <end position="48"/>
    </location>
</feature>
<feature type="region of interest" description="Disordered" evidence="1">
    <location>
        <begin position="99"/>
        <end position="134"/>
    </location>
</feature>
<feature type="region of interest" description="Disordered" evidence="1">
    <location>
        <begin position="190"/>
        <end position="209"/>
    </location>
</feature>
<feature type="compositionally biased region" description="Polar residues" evidence="1">
    <location>
        <begin position="35"/>
        <end position="44"/>
    </location>
</feature>
<feature type="compositionally biased region" description="Basic and acidic residues" evidence="1">
    <location>
        <begin position="99"/>
        <end position="110"/>
    </location>
</feature>
<feature type="compositionally biased region" description="Polar residues" evidence="1">
    <location>
        <begin position="111"/>
        <end position="126"/>
    </location>
</feature>
<accession>Q92360</accession>
<protein>
    <recommendedName>
        <fullName>Uncharacterized protein C6G9.15c</fullName>
    </recommendedName>
</protein>
<reference key="1">
    <citation type="journal article" date="2002" name="Nature">
        <title>The genome sequence of Schizosaccharomyces pombe.</title>
        <authorList>
            <person name="Wood V."/>
            <person name="Gwilliam R."/>
            <person name="Rajandream M.A."/>
            <person name="Lyne M.H."/>
            <person name="Lyne R."/>
            <person name="Stewart A."/>
            <person name="Sgouros J.G."/>
            <person name="Peat N."/>
            <person name="Hayles J."/>
            <person name="Baker S.G."/>
            <person name="Basham D."/>
            <person name="Bowman S."/>
            <person name="Brooks K."/>
            <person name="Brown D."/>
            <person name="Brown S."/>
            <person name="Chillingworth T."/>
            <person name="Churcher C.M."/>
            <person name="Collins M."/>
            <person name="Connor R."/>
            <person name="Cronin A."/>
            <person name="Davis P."/>
            <person name="Feltwell T."/>
            <person name="Fraser A."/>
            <person name="Gentles S."/>
            <person name="Goble A."/>
            <person name="Hamlin N."/>
            <person name="Harris D.E."/>
            <person name="Hidalgo J."/>
            <person name="Hodgson G."/>
            <person name="Holroyd S."/>
            <person name="Hornsby T."/>
            <person name="Howarth S."/>
            <person name="Huckle E.J."/>
            <person name="Hunt S."/>
            <person name="Jagels K."/>
            <person name="James K.D."/>
            <person name="Jones L."/>
            <person name="Jones M."/>
            <person name="Leather S."/>
            <person name="McDonald S."/>
            <person name="McLean J."/>
            <person name="Mooney P."/>
            <person name="Moule S."/>
            <person name="Mungall K.L."/>
            <person name="Murphy L.D."/>
            <person name="Niblett D."/>
            <person name="Odell C."/>
            <person name="Oliver K."/>
            <person name="O'Neil S."/>
            <person name="Pearson D."/>
            <person name="Quail M.A."/>
            <person name="Rabbinowitsch E."/>
            <person name="Rutherford K.M."/>
            <person name="Rutter S."/>
            <person name="Saunders D."/>
            <person name="Seeger K."/>
            <person name="Sharp S."/>
            <person name="Skelton J."/>
            <person name="Simmonds M.N."/>
            <person name="Squares R."/>
            <person name="Squares S."/>
            <person name="Stevens K."/>
            <person name="Taylor K."/>
            <person name="Taylor R.G."/>
            <person name="Tivey A."/>
            <person name="Walsh S.V."/>
            <person name="Warren T."/>
            <person name="Whitehead S."/>
            <person name="Woodward J.R."/>
            <person name="Volckaert G."/>
            <person name="Aert R."/>
            <person name="Robben J."/>
            <person name="Grymonprez B."/>
            <person name="Weltjens I."/>
            <person name="Vanstreels E."/>
            <person name="Rieger M."/>
            <person name="Schaefer M."/>
            <person name="Mueller-Auer S."/>
            <person name="Gabel C."/>
            <person name="Fuchs M."/>
            <person name="Duesterhoeft A."/>
            <person name="Fritzc C."/>
            <person name="Holzer E."/>
            <person name="Moestl D."/>
            <person name="Hilbert H."/>
            <person name="Borzym K."/>
            <person name="Langer I."/>
            <person name="Beck A."/>
            <person name="Lehrach H."/>
            <person name="Reinhardt R."/>
            <person name="Pohl T.M."/>
            <person name="Eger P."/>
            <person name="Zimmermann W."/>
            <person name="Wedler H."/>
            <person name="Wambutt R."/>
            <person name="Purnelle B."/>
            <person name="Goffeau A."/>
            <person name="Cadieu E."/>
            <person name="Dreano S."/>
            <person name="Gloux S."/>
            <person name="Lelaure V."/>
            <person name="Mottier S."/>
            <person name="Galibert F."/>
            <person name="Aves S.J."/>
            <person name="Xiang Z."/>
            <person name="Hunt C."/>
            <person name="Moore K."/>
            <person name="Hurst S.M."/>
            <person name="Lucas M."/>
            <person name="Rochet M."/>
            <person name="Gaillardin C."/>
            <person name="Tallada V.A."/>
            <person name="Garzon A."/>
            <person name="Thode G."/>
            <person name="Daga R.R."/>
            <person name="Cruzado L."/>
            <person name="Jimenez J."/>
            <person name="Sanchez M."/>
            <person name="del Rey F."/>
            <person name="Benito J."/>
            <person name="Dominguez A."/>
            <person name="Revuelta J.L."/>
            <person name="Moreno S."/>
            <person name="Armstrong J."/>
            <person name="Forsburg S.L."/>
            <person name="Cerutti L."/>
            <person name="Lowe T."/>
            <person name="McCombie W.R."/>
            <person name="Paulsen I."/>
            <person name="Potashkin J."/>
            <person name="Shpakovski G.V."/>
            <person name="Ussery D."/>
            <person name="Barrell B.G."/>
            <person name="Nurse P."/>
        </authorList>
    </citation>
    <scope>NUCLEOTIDE SEQUENCE [LARGE SCALE GENOMIC DNA]</scope>
    <source>
        <strain>972 / ATCC 24843</strain>
    </source>
</reference>
<name>YDHF_SCHPO</name>
<sequence length="498" mass="55323">MSNDSSDNQIRRRHHPVLPKGSFQKKDDSIVLEQELSTPKQVNQARPKFPSPITPTLPEMHLPVGNSKFQAVLPSLISPTLPPGFGMASDDSEASLAENDLHPLDNDSTRTSKTLKNSSEVLTASKLTDEGNSKPLLEEGEVAVSSPILLDSKDVIMGVTKSSKNLVEDAHKSKKASTNSSINNMVSTVNSENSNVNNGSSLNGNTSSNLKRKANVTLGDYKRLKVKNKNPSSQELITADVDKTSGSLSEKSEVNHASLKKTYMRLLNSGKMQKKECDKKGKFFEAYAVDAVLCYTVAFHLQNLSNLSRNHPATTSNWRTLPAYIQFLIKEEDKLDPCIQGLFFLLLGIAFREIFHIEVMRIRHSQLNLMRDIKESSSGLTSAKSLGDAQNLCENAVRLYSSYKHYITSMKKGSSLLTIEYISSTAPNTFNEFFVQKKANIPLPLDIDAPIGVTIRFSHNLLNEWIKKQGDVFESKLLKEDIENLQSLEESYPIAQYL</sequence>
<keyword id="KW-1185">Reference proteome</keyword>
<organism>
    <name type="scientific">Schizosaccharomyces pombe (strain 972 / ATCC 24843)</name>
    <name type="common">Fission yeast</name>
    <dbReference type="NCBI Taxonomy" id="284812"/>
    <lineage>
        <taxon>Eukaryota</taxon>
        <taxon>Fungi</taxon>
        <taxon>Dikarya</taxon>
        <taxon>Ascomycota</taxon>
        <taxon>Taphrinomycotina</taxon>
        <taxon>Schizosaccharomycetes</taxon>
        <taxon>Schizosaccharomycetales</taxon>
        <taxon>Schizosaccharomycetaceae</taxon>
        <taxon>Schizosaccharomyces</taxon>
    </lineage>
</organism>
<dbReference type="EMBL" id="CU329670">
    <property type="protein sequence ID" value="CAB03617.1"/>
    <property type="molecule type" value="Genomic_DNA"/>
</dbReference>
<dbReference type="PIR" id="T39077">
    <property type="entry name" value="T39077"/>
</dbReference>
<dbReference type="BioGRID" id="278447">
    <property type="interactions" value="19"/>
</dbReference>
<dbReference type="STRING" id="284812.Q92360"/>
<dbReference type="iPTMnet" id="Q92360"/>
<dbReference type="PaxDb" id="4896-SPAC6G9.15c.1"/>
<dbReference type="EnsemblFungi" id="SPAC6G9.15c.1">
    <property type="protein sequence ID" value="SPAC6G9.15c.1:pep"/>
    <property type="gene ID" value="SPAC6G9.15c"/>
</dbReference>
<dbReference type="KEGG" id="spo:2541960"/>
<dbReference type="PomBase" id="SPAC6G9.15c"/>
<dbReference type="VEuPathDB" id="FungiDB:SPAC6G9.15c"/>
<dbReference type="HOGENOM" id="CLU_621355_0_0_1"/>
<dbReference type="InParanoid" id="Q92360"/>
<dbReference type="OMA" id="RIFTIEM"/>
<dbReference type="PRO" id="PR:Q92360"/>
<dbReference type="Proteomes" id="UP000002485">
    <property type="component" value="Chromosome I"/>
</dbReference>
<dbReference type="GO" id="GO:0005634">
    <property type="term" value="C:nucleus"/>
    <property type="evidence" value="ECO:0007005"/>
    <property type="project" value="PomBase"/>
</dbReference>
<dbReference type="GO" id="GO:0032783">
    <property type="term" value="C:super elongation complex"/>
    <property type="evidence" value="ECO:0000314"/>
    <property type="project" value="PomBase"/>
</dbReference>
<dbReference type="GO" id="GO:0003711">
    <property type="term" value="F:transcription elongation factor activity"/>
    <property type="evidence" value="ECO:0000269"/>
    <property type="project" value="PomBase"/>
</dbReference>
<dbReference type="GO" id="GO:0006368">
    <property type="term" value="P:transcription elongation by RNA polymerase II"/>
    <property type="evidence" value="ECO:0000315"/>
    <property type="project" value="PomBase"/>
</dbReference>
<dbReference type="InterPro" id="IPR049403">
    <property type="entry name" value="Ebp1_C"/>
</dbReference>
<dbReference type="Pfam" id="PF21204">
    <property type="entry name" value="Ebp1_C"/>
    <property type="match status" value="1"/>
</dbReference>
<gene>
    <name type="ORF">SPAC6G9.15c</name>
</gene>
<evidence type="ECO:0000256" key="1">
    <source>
        <dbReference type="SAM" id="MobiDB-lite"/>
    </source>
</evidence>
<proteinExistence type="predicted"/>